<evidence type="ECO:0000255" key="1">
    <source>
        <dbReference type="HAMAP-Rule" id="MF_00219"/>
    </source>
</evidence>
<reference key="1">
    <citation type="journal article" date="2002" name="Environ. Microbiol.">
        <title>Complete genome sequence and comparative analysis of the metabolically versatile Pseudomonas putida KT2440.</title>
        <authorList>
            <person name="Nelson K.E."/>
            <person name="Weinel C."/>
            <person name="Paulsen I.T."/>
            <person name="Dodson R.J."/>
            <person name="Hilbert H."/>
            <person name="Martins dos Santos V.A.P."/>
            <person name="Fouts D.E."/>
            <person name="Gill S.R."/>
            <person name="Pop M."/>
            <person name="Holmes M."/>
            <person name="Brinkac L.M."/>
            <person name="Beanan M.J."/>
            <person name="DeBoy R.T."/>
            <person name="Daugherty S.C."/>
            <person name="Kolonay J.F."/>
            <person name="Madupu R."/>
            <person name="Nelson W.C."/>
            <person name="White O."/>
            <person name="Peterson J.D."/>
            <person name="Khouri H.M."/>
            <person name="Hance I."/>
            <person name="Chris Lee P."/>
            <person name="Holtzapple E.K."/>
            <person name="Scanlan D."/>
            <person name="Tran K."/>
            <person name="Moazzez A."/>
            <person name="Utterback T.R."/>
            <person name="Rizzo M."/>
            <person name="Lee K."/>
            <person name="Kosack D."/>
            <person name="Moestl D."/>
            <person name="Wedler H."/>
            <person name="Lauber J."/>
            <person name="Stjepandic D."/>
            <person name="Hoheisel J."/>
            <person name="Straetz M."/>
            <person name="Heim S."/>
            <person name="Kiewitz C."/>
            <person name="Eisen J.A."/>
            <person name="Timmis K.N."/>
            <person name="Duesterhoeft A."/>
            <person name="Tuemmler B."/>
            <person name="Fraser C.M."/>
        </authorList>
    </citation>
    <scope>NUCLEOTIDE SEQUENCE [LARGE SCALE GENOMIC DNA]</scope>
    <source>
        <strain>ATCC 47054 / DSM 6125 / CFBP 8728 / NCIMB 11950 / KT2440</strain>
    </source>
</reference>
<keyword id="KW-0378">Hydrolase</keyword>
<keyword id="KW-0479">Metal-binding</keyword>
<keyword id="KW-0665">Pyrimidine biosynthesis</keyword>
<keyword id="KW-1185">Reference proteome</keyword>
<keyword id="KW-0862">Zinc</keyword>
<gene>
    <name evidence="1" type="primary">pyrC</name>
    <name type="ordered locus">PP_1086</name>
</gene>
<sequence>MSDRLTLLRPDDWHIHLRDGAVLPHTVGDVARTFARAIIMPNLVPPVRNVTEAGAYRERILAARPAGSRFEPLMVLYLTDRTSPEDVRAAKASGFVYAAKLYPAGATTNSDSGVTSIDNIFPAIEALAEVGMPLLVHGEVTRSEIDVFDREKRFIDEHMRRVVERFPTLKVVFEHITTSDAAQFVTEAPANVGATITAQHLLYNRNHMLVGGIRPHFYCLPILKRNTHQVALLDAATSGNPKFFLGTDSAPHARHAKEAACGCAGCYTAYAAIEMYAEAFEQRNALDKLEGFASLHGPAFYGLPANTDTITLVREEWTAPESLPFGEQTVVPLRAGEKLRWRLLEKNA</sequence>
<dbReference type="EC" id="3.5.2.3" evidence="1"/>
<dbReference type="EMBL" id="AE015451">
    <property type="protein sequence ID" value="AAN66711.1"/>
    <property type="molecule type" value="Genomic_DNA"/>
</dbReference>
<dbReference type="RefSeq" id="NP_743247.1">
    <property type="nucleotide sequence ID" value="NC_002947.4"/>
</dbReference>
<dbReference type="RefSeq" id="WP_010952253.1">
    <property type="nucleotide sequence ID" value="NZ_CP169744.1"/>
</dbReference>
<dbReference type="SMR" id="Q88NW7"/>
<dbReference type="STRING" id="160488.PP_1086"/>
<dbReference type="MEROPS" id="M38.A02"/>
<dbReference type="PaxDb" id="160488-PP_1086"/>
<dbReference type="KEGG" id="ppu:PP_1086"/>
<dbReference type="PATRIC" id="fig|160488.4.peg.1151"/>
<dbReference type="eggNOG" id="COG0418">
    <property type="taxonomic scope" value="Bacteria"/>
</dbReference>
<dbReference type="HOGENOM" id="CLU_041558_1_0_6"/>
<dbReference type="OrthoDB" id="9808095at2"/>
<dbReference type="PhylomeDB" id="Q88NW7"/>
<dbReference type="BioCyc" id="PPUT160488:G1G01-1159-MONOMER"/>
<dbReference type="UniPathway" id="UPA00070">
    <property type="reaction ID" value="UER00117"/>
</dbReference>
<dbReference type="Proteomes" id="UP000000556">
    <property type="component" value="Chromosome"/>
</dbReference>
<dbReference type="GO" id="GO:0005829">
    <property type="term" value="C:cytosol"/>
    <property type="evidence" value="ECO:0007669"/>
    <property type="project" value="TreeGrafter"/>
</dbReference>
<dbReference type="GO" id="GO:0004151">
    <property type="term" value="F:dihydroorotase activity"/>
    <property type="evidence" value="ECO:0007669"/>
    <property type="project" value="UniProtKB-UniRule"/>
</dbReference>
<dbReference type="GO" id="GO:0008270">
    <property type="term" value="F:zinc ion binding"/>
    <property type="evidence" value="ECO:0007669"/>
    <property type="project" value="UniProtKB-UniRule"/>
</dbReference>
<dbReference type="GO" id="GO:0006207">
    <property type="term" value="P:'de novo' pyrimidine nucleobase biosynthetic process"/>
    <property type="evidence" value="ECO:0007669"/>
    <property type="project" value="TreeGrafter"/>
</dbReference>
<dbReference type="GO" id="GO:0044205">
    <property type="term" value="P:'de novo' UMP biosynthetic process"/>
    <property type="evidence" value="ECO:0007669"/>
    <property type="project" value="UniProtKB-UniRule"/>
</dbReference>
<dbReference type="CDD" id="cd01294">
    <property type="entry name" value="DHOase"/>
    <property type="match status" value="1"/>
</dbReference>
<dbReference type="FunFam" id="3.20.20.140:FF:000006">
    <property type="entry name" value="Dihydroorotase"/>
    <property type="match status" value="1"/>
</dbReference>
<dbReference type="Gene3D" id="3.20.20.140">
    <property type="entry name" value="Metal-dependent hydrolases"/>
    <property type="match status" value="1"/>
</dbReference>
<dbReference type="HAMAP" id="MF_00219">
    <property type="entry name" value="PyrC_classII"/>
    <property type="match status" value="1"/>
</dbReference>
<dbReference type="InterPro" id="IPR006680">
    <property type="entry name" value="Amidohydro-rel"/>
</dbReference>
<dbReference type="InterPro" id="IPR004721">
    <property type="entry name" value="DHOdimr"/>
</dbReference>
<dbReference type="InterPro" id="IPR002195">
    <property type="entry name" value="Dihydroorotase_CS"/>
</dbReference>
<dbReference type="InterPro" id="IPR032466">
    <property type="entry name" value="Metal_Hydrolase"/>
</dbReference>
<dbReference type="NCBIfam" id="TIGR00856">
    <property type="entry name" value="pyrC_dimer"/>
    <property type="match status" value="1"/>
</dbReference>
<dbReference type="PANTHER" id="PTHR43137">
    <property type="entry name" value="DIHYDROOROTASE"/>
    <property type="match status" value="1"/>
</dbReference>
<dbReference type="PANTHER" id="PTHR43137:SF1">
    <property type="entry name" value="DIHYDROOROTASE"/>
    <property type="match status" value="1"/>
</dbReference>
<dbReference type="Pfam" id="PF01979">
    <property type="entry name" value="Amidohydro_1"/>
    <property type="match status" value="1"/>
</dbReference>
<dbReference type="PIRSF" id="PIRSF001237">
    <property type="entry name" value="DHOdimr"/>
    <property type="match status" value="1"/>
</dbReference>
<dbReference type="SUPFAM" id="SSF51556">
    <property type="entry name" value="Metallo-dependent hydrolases"/>
    <property type="match status" value="1"/>
</dbReference>
<dbReference type="PROSITE" id="PS00482">
    <property type="entry name" value="DIHYDROOROTASE_1"/>
    <property type="match status" value="1"/>
</dbReference>
<dbReference type="PROSITE" id="PS00483">
    <property type="entry name" value="DIHYDROOROTASE_2"/>
    <property type="match status" value="1"/>
</dbReference>
<accession>Q88NW7</accession>
<name>PYRC_PSEPK</name>
<protein>
    <recommendedName>
        <fullName evidence="1">Dihydroorotase</fullName>
        <shortName evidence="1">DHOase</shortName>
        <ecNumber evidence="1">3.5.2.3</ecNumber>
    </recommendedName>
</protein>
<proteinExistence type="inferred from homology"/>
<organism>
    <name type="scientific">Pseudomonas putida (strain ATCC 47054 / DSM 6125 / CFBP 8728 / NCIMB 11950 / KT2440)</name>
    <dbReference type="NCBI Taxonomy" id="160488"/>
    <lineage>
        <taxon>Bacteria</taxon>
        <taxon>Pseudomonadati</taxon>
        <taxon>Pseudomonadota</taxon>
        <taxon>Gammaproteobacteria</taxon>
        <taxon>Pseudomonadales</taxon>
        <taxon>Pseudomonadaceae</taxon>
        <taxon>Pseudomonas</taxon>
    </lineage>
</organism>
<feature type="chain" id="PRO_0000147213" description="Dihydroorotase">
    <location>
        <begin position="1"/>
        <end position="348"/>
    </location>
</feature>
<feature type="active site" evidence="1">
    <location>
        <position position="248"/>
    </location>
</feature>
<feature type="binding site" evidence="1">
    <location>
        <position position="14"/>
    </location>
    <ligand>
        <name>Zn(2+)</name>
        <dbReference type="ChEBI" id="CHEBI:29105"/>
        <label>1</label>
    </ligand>
</feature>
<feature type="binding site" evidence="1">
    <location>
        <begin position="16"/>
        <end position="18"/>
    </location>
    <ligand>
        <name>substrate</name>
    </ligand>
</feature>
<feature type="binding site" evidence="1">
    <location>
        <position position="16"/>
    </location>
    <ligand>
        <name>Zn(2+)</name>
        <dbReference type="ChEBI" id="CHEBI:29105"/>
        <label>1</label>
    </ligand>
</feature>
<feature type="binding site" evidence="1">
    <location>
        <position position="42"/>
    </location>
    <ligand>
        <name>substrate</name>
    </ligand>
</feature>
<feature type="binding site" description="via carbamate group" evidence="1">
    <location>
        <position position="100"/>
    </location>
    <ligand>
        <name>Zn(2+)</name>
        <dbReference type="ChEBI" id="CHEBI:29105"/>
        <label>1</label>
    </ligand>
</feature>
<feature type="binding site" description="via carbamate group" evidence="1">
    <location>
        <position position="100"/>
    </location>
    <ligand>
        <name>Zn(2+)</name>
        <dbReference type="ChEBI" id="CHEBI:29105"/>
        <label>2</label>
    </ligand>
</feature>
<feature type="binding site" evidence="1">
    <location>
        <position position="137"/>
    </location>
    <ligand>
        <name>substrate</name>
    </ligand>
</feature>
<feature type="binding site" evidence="1">
    <location>
        <position position="137"/>
    </location>
    <ligand>
        <name>Zn(2+)</name>
        <dbReference type="ChEBI" id="CHEBI:29105"/>
        <label>2</label>
    </ligand>
</feature>
<feature type="binding site" evidence="1">
    <location>
        <position position="175"/>
    </location>
    <ligand>
        <name>Zn(2+)</name>
        <dbReference type="ChEBI" id="CHEBI:29105"/>
        <label>2</label>
    </ligand>
</feature>
<feature type="binding site" evidence="1">
    <location>
        <position position="220"/>
    </location>
    <ligand>
        <name>substrate</name>
    </ligand>
</feature>
<feature type="binding site" evidence="1">
    <location>
        <position position="248"/>
    </location>
    <ligand>
        <name>Zn(2+)</name>
        <dbReference type="ChEBI" id="CHEBI:29105"/>
        <label>1</label>
    </ligand>
</feature>
<feature type="binding site" evidence="1">
    <location>
        <position position="252"/>
    </location>
    <ligand>
        <name>substrate</name>
    </ligand>
</feature>
<feature type="binding site" evidence="1">
    <location>
        <position position="264"/>
    </location>
    <ligand>
        <name>substrate</name>
    </ligand>
</feature>
<feature type="modified residue" description="N6-carboxylysine" evidence="1">
    <location>
        <position position="100"/>
    </location>
</feature>
<comment type="function">
    <text evidence="1">Catalyzes the reversible cyclization of carbamoyl aspartate to dihydroorotate.</text>
</comment>
<comment type="catalytic activity">
    <reaction evidence="1">
        <text>(S)-dihydroorotate + H2O = N-carbamoyl-L-aspartate + H(+)</text>
        <dbReference type="Rhea" id="RHEA:24296"/>
        <dbReference type="ChEBI" id="CHEBI:15377"/>
        <dbReference type="ChEBI" id="CHEBI:15378"/>
        <dbReference type="ChEBI" id="CHEBI:30864"/>
        <dbReference type="ChEBI" id="CHEBI:32814"/>
        <dbReference type="EC" id="3.5.2.3"/>
    </reaction>
</comment>
<comment type="cofactor">
    <cofactor evidence="1">
        <name>Zn(2+)</name>
        <dbReference type="ChEBI" id="CHEBI:29105"/>
    </cofactor>
    <text evidence="1">Binds 2 Zn(2+) ions per subunit.</text>
</comment>
<comment type="pathway">
    <text evidence="1">Pyrimidine metabolism; UMP biosynthesis via de novo pathway; (S)-dihydroorotate from bicarbonate: step 3/3.</text>
</comment>
<comment type="subunit">
    <text evidence="1">Homodimer.</text>
</comment>
<comment type="similarity">
    <text evidence="1">Belongs to the metallo-dependent hydrolases superfamily. DHOase family. Class II DHOase subfamily.</text>
</comment>